<reference key="1">
    <citation type="journal article" date="2007" name="PLoS Genet.">
        <title>The complete genome sequence of Yersinia pseudotuberculosis IP31758, the causative agent of Far East scarlet-like fever.</title>
        <authorList>
            <person name="Eppinger M."/>
            <person name="Rosovitz M.J."/>
            <person name="Fricke W.F."/>
            <person name="Rasko D.A."/>
            <person name="Kokorina G."/>
            <person name="Fayolle C."/>
            <person name="Lindler L.E."/>
            <person name="Carniel E."/>
            <person name="Ravel J."/>
        </authorList>
    </citation>
    <scope>NUCLEOTIDE SEQUENCE [LARGE SCALE GENOMIC DNA]</scope>
    <source>
        <strain>IP 31758</strain>
    </source>
</reference>
<proteinExistence type="inferred from homology"/>
<name>PANB_YERP3</name>
<gene>
    <name evidence="1" type="primary">panB</name>
    <name type="ordered locus">YpsIP31758_3343</name>
</gene>
<organism>
    <name type="scientific">Yersinia pseudotuberculosis serotype O:1b (strain IP 31758)</name>
    <dbReference type="NCBI Taxonomy" id="349747"/>
    <lineage>
        <taxon>Bacteria</taxon>
        <taxon>Pseudomonadati</taxon>
        <taxon>Pseudomonadota</taxon>
        <taxon>Gammaproteobacteria</taxon>
        <taxon>Enterobacterales</taxon>
        <taxon>Yersiniaceae</taxon>
        <taxon>Yersinia</taxon>
    </lineage>
</organism>
<sequence length="265" mass="28695">MKTTTMSQLRQWKQEKRKFATLTAYDASFAQLFAEQGIQVLLVGDSLGMTLQGFDSTLPVTVADVAYHTRAVRRGAPHCLLLADMPFMSYATPELAFTHAAELMRAGANMVKLEGGSWLCDTIRMLAERAVPVCGHLGLTPQSVNIFGGYKVQGREEVAANQLLQDAIVLEQAGAQLLVLECVPVELAQRVTEELTIPVIGIGAGNVTDGQILVMHDALGITGGHTPKFSKNFLAHSAGDIRAAIKLYIEEVEGGIYPAEEHTFQ</sequence>
<protein>
    <recommendedName>
        <fullName evidence="1">3-methyl-2-oxobutanoate hydroxymethyltransferase</fullName>
        <ecNumber evidence="1">2.1.2.11</ecNumber>
    </recommendedName>
    <alternativeName>
        <fullName evidence="1">Ketopantoate hydroxymethyltransferase</fullName>
        <shortName evidence="1">KPHMT</shortName>
    </alternativeName>
</protein>
<keyword id="KW-0963">Cytoplasm</keyword>
<keyword id="KW-0460">Magnesium</keyword>
<keyword id="KW-0479">Metal-binding</keyword>
<keyword id="KW-0566">Pantothenate biosynthesis</keyword>
<keyword id="KW-0808">Transferase</keyword>
<dbReference type="EC" id="2.1.2.11" evidence="1"/>
<dbReference type="EMBL" id="CP000720">
    <property type="protein sequence ID" value="ABS47724.1"/>
    <property type="molecule type" value="Genomic_DNA"/>
</dbReference>
<dbReference type="RefSeq" id="WP_012105658.1">
    <property type="nucleotide sequence ID" value="NC_009708.1"/>
</dbReference>
<dbReference type="SMR" id="A7FM22"/>
<dbReference type="KEGG" id="ypi:YpsIP31758_3343"/>
<dbReference type="HOGENOM" id="CLU_036645_1_0_6"/>
<dbReference type="UniPathway" id="UPA00028">
    <property type="reaction ID" value="UER00003"/>
</dbReference>
<dbReference type="Proteomes" id="UP000002412">
    <property type="component" value="Chromosome"/>
</dbReference>
<dbReference type="GO" id="GO:0005737">
    <property type="term" value="C:cytoplasm"/>
    <property type="evidence" value="ECO:0007669"/>
    <property type="project" value="UniProtKB-SubCell"/>
</dbReference>
<dbReference type="GO" id="GO:0003864">
    <property type="term" value="F:3-methyl-2-oxobutanoate hydroxymethyltransferase activity"/>
    <property type="evidence" value="ECO:0007669"/>
    <property type="project" value="UniProtKB-UniRule"/>
</dbReference>
<dbReference type="GO" id="GO:0000287">
    <property type="term" value="F:magnesium ion binding"/>
    <property type="evidence" value="ECO:0007669"/>
    <property type="project" value="TreeGrafter"/>
</dbReference>
<dbReference type="GO" id="GO:0015940">
    <property type="term" value="P:pantothenate biosynthetic process"/>
    <property type="evidence" value="ECO:0007669"/>
    <property type="project" value="UniProtKB-UniRule"/>
</dbReference>
<dbReference type="CDD" id="cd06557">
    <property type="entry name" value="KPHMT-like"/>
    <property type="match status" value="1"/>
</dbReference>
<dbReference type="FunFam" id="3.20.20.60:FF:000003">
    <property type="entry name" value="3-methyl-2-oxobutanoate hydroxymethyltransferase"/>
    <property type="match status" value="1"/>
</dbReference>
<dbReference type="Gene3D" id="3.20.20.60">
    <property type="entry name" value="Phosphoenolpyruvate-binding domains"/>
    <property type="match status" value="1"/>
</dbReference>
<dbReference type="HAMAP" id="MF_00156">
    <property type="entry name" value="PanB"/>
    <property type="match status" value="1"/>
</dbReference>
<dbReference type="InterPro" id="IPR003700">
    <property type="entry name" value="Pantoate_hydroxy_MeTrfase"/>
</dbReference>
<dbReference type="InterPro" id="IPR015813">
    <property type="entry name" value="Pyrv/PenolPyrv_kinase-like_dom"/>
</dbReference>
<dbReference type="InterPro" id="IPR040442">
    <property type="entry name" value="Pyrv_kinase-like_dom_sf"/>
</dbReference>
<dbReference type="NCBIfam" id="TIGR00222">
    <property type="entry name" value="panB"/>
    <property type="match status" value="1"/>
</dbReference>
<dbReference type="NCBIfam" id="NF001452">
    <property type="entry name" value="PRK00311.1"/>
    <property type="match status" value="1"/>
</dbReference>
<dbReference type="PANTHER" id="PTHR20881">
    <property type="entry name" value="3-METHYL-2-OXOBUTANOATE HYDROXYMETHYLTRANSFERASE"/>
    <property type="match status" value="1"/>
</dbReference>
<dbReference type="PANTHER" id="PTHR20881:SF0">
    <property type="entry name" value="3-METHYL-2-OXOBUTANOATE HYDROXYMETHYLTRANSFERASE"/>
    <property type="match status" value="1"/>
</dbReference>
<dbReference type="Pfam" id="PF02548">
    <property type="entry name" value="Pantoate_transf"/>
    <property type="match status" value="1"/>
</dbReference>
<dbReference type="PIRSF" id="PIRSF000388">
    <property type="entry name" value="Pantoate_hydroxy_MeTrfase"/>
    <property type="match status" value="1"/>
</dbReference>
<dbReference type="SUPFAM" id="SSF51621">
    <property type="entry name" value="Phosphoenolpyruvate/pyruvate domain"/>
    <property type="match status" value="1"/>
</dbReference>
<accession>A7FM22</accession>
<comment type="function">
    <text evidence="1">Catalyzes the reversible reaction in which hydroxymethyl group from 5,10-methylenetetrahydrofolate is transferred onto alpha-ketoisovalerate to form ketopantoate.</text>
</comment>
<comment type="catalytic activity">
    <reaction evidence="1">
        <text>3-methyl-2-oxobutanoate + (6R)-5,10-methylene-5,6,7,8-tetrahydrofolate + H2O = 2-dehydropantoate + (6S)-5,6,7,8-tetrahydrofolate</text>
        <dbReference type="Rhea" id="RHEA:11824"/>
        <dbReference type="ChEBI" id="CHEBI:11561"/>
        <dbReference type="ChEBI" id="CHEBI:11851"/>
        <dbReference type="ChEBI" id="CHEBI:15377"/>
        <dbReference type="ChEBI" id="CHEBI:15636"/>
        <dbReference type="ChEBI" id="CHEBI:57453"/>
        <dbReference type="EC" id="2.1.2.11"/>
    </reaction>
</comment>
<comment type="cofactor">
    <cofactor evidence="1">
        <name>Mg(2+)</name>
        <dbReference type="ChEBI" id="CHEBI:18420"/>
    </cofactor>
    <text evidence="1">Binds 1 Mg(2+) ion per subunit.</text>
</comment>
<comment type="pathway">
    <text evidence="1">Cofactor biosynthesis; (R)-pantothenate biosynthesis; (R)-pantoate from 3-methyl-2-oxobutanoate: step 1/2.</text>
</comment>
<comment type="subunit">
    <text evidence="1">Homodecamer; pentamer of dimers.</text>
</comment>
<comment type="subcellular location">
    <subcellularLocation>
        <location evidence="1">Cytoplasm</location>
    </subcellularLocation>
</comment>
<comment type="similarity">
    <text evidence="1">Belongs to the PanB family.</text>
</comment>
<feature type="chain" id="PRO_1000058187" description="3-methyl-2-oxobutanoate hydroxymethyltransferase">
    <location>
        <begin position="1"/>
        <end position="265"/>
    </location>
</feature>
<feature type="active site" description="Proton acceptor" evidence="1">
    <location>
        <position position="181"/>
    </location>
</feature>
<feature type="binding site" evidence="1">
    <location>
        <begin position="45"/>
        <end position="46"/>
    </location>
    <ligand>
        <name>3-methyl-2-oxobutanoate</name>
        <dbReference type="ChEBI" id="CHEBI:11851"/>
    </ligand>
</feature>
<feature type="binding site" evidence="1">
    <location>
        <position position="45"/>
    </location>
    <ligand>
        <name>Mg(2+)</name>
        <dbReference type="ChEBI" id="CHEBI:18420"/>
    </ligand>
</feature>
<feature type="binding site" evidence="1">
    <location>
        <position position="84"/>
    </location>
    <ligand>
        <name>3-methyl-2-oxobutanoate</name>
        <dbReference type="ChEBI" id="CHEBI:11851"/>
    </ligand>
</feature>
<feature type="binding site" evidence="1">
    <location>
        <position position="84"/>
    </location>
    <ligand>
        <name>Mg(2+)</name>
        <dbReference type="ChEBI" id="CHEBI:18420"/>
    </ligand>
</feature>
<feature type="binding site" evidence="1">
    <location>
        <position position="112"/>
    </location>
    <ligand>
        <name>3-methyl-2-oxobutanoate</name>
        <dbReference type="ChEBI" id="CHEBI:11851"/>
    </ligand>
</feature>
<feature type="binding site" evidence="1">
    <location>
        <position position="114"/>
    </location>
    <ligand>
        <name>Mg(2+)</name>
        <dbReference type="ChEBI" id="CHEBI:18420"/>
    </ligand>
</feature>
<evidence type="ECO:0000255" key="1">
    <source>
        <dbReference type="HAMAP-Rule" id="MF_00156"/>
    </source>
</evidence>